<protein>
    <recommendedName>
        <fullName evidence="1">Cytoplasmic tRNA 2-thiolation protein 2</fullName>
    </recommendedName>
</protein>
<organism>
    <name type="scientific">Neosartorya fischeri (strain ATCC 1020 / DSM 3700 / CBS 544.65 / FGSC A1164 / JCM 1740 / NRRL 181 / WB 181)</name>
    <name type="common">Aspergillus fischerianus</name>
    <dbReference type="NCBI Taxonomy" id="331117"/>
    <lineage>
        <taxon>Eukaryota</taxon>
        <taxon>Fungi</taxon>
        <taxon>Dikarya</taxon>
        <taxon>Ascomycota</taxon>
        <taxon>Pezizomycotina</taxon>
        <taxon>Eurotiomycetes</taxon>
        <taxon>Eurotiomycetidae</taxon>
        <taxon>Eurotiales</taxon>
        <taxon>Aspergillaceae</taxon>
        <taxon>Aspergillus</taxon>
        <taxon>Aspergillus subgen. Fumigati</taxon>
    </lineage>
</organism>
<sequence length="370" mass="40809">MPGKQLSDPCVDCSDAEAILTLRTRRLCQTCYARFVNFKVFKRMENYRLRRNMPKTGPCKLLLPLSCGISSSVLLHILNAQIQLELAKSHPSPGFDLHVLVIEPSSISHSSPSYDEGFGLLQQTFPLHSFTRIPLHSIFELDPELQEVISQFSKDGFVDDAGLSAKERLDAFRASIPTSTSKVDVDYVLITRLVVAFAKKIACRGVLWGDSDTRLAAKTLANVAKGRGSSLTWQVCDGMSPFGVEFNFPLRDLFKAEVDNYASFFPELTRIIIPDEPPSENVLTKNLSIDELMMRYVQTQGEKYPGVMANVTRTASKLQASLTPANVPQCSFCGAFMLNSGNNGGGDTTGASRALELCYACTRSRPELTC</sequence>
<keyword id="KW-0963">Cytoplasm</keyword>
<keyword id="KW-1185">Reference proteome</keyword>
<keyword id="KW-0819">tRNA processing</keyword>
<gene>
    <name type="primary">ncs2</name>
    <name type="synonym">ctu2</name>
    <name type="ORF">NFIA_074800</name>
</gene>
<comment type="function">
    <text evidence="1">Plays a central role in 2-thiolation of mcm(5)S(2)U at tRNA wobble positions of tRNA(Lys), tRNA(Glu) and tRNA(Gln). May act by forming a heterodimer with ncs6 that ligates sulfur from thiocarboxylated urm1 onto the uridine of tRNAs at wobble position. Prior mcm(5) tRNA modification by the elongator complex is required for 2-thiolation. May also be involved in protein urmylation.</text>
</comment>
<comment type="pathway">
    <text evidence="1">tRNA modification; 5-methoxycarbonylmethyl-2-thiouridine-tRNA biosynthesis.</text>
</comment>
<comment type="subcellular location">
    <subcellularLocation>
        <location evidence="1">Cytoplasm</location>
    </subcellularLocation>
</comment>
<comment type="similarity">
    <text evidence="1">Belongs to the CTU2/NCS2 family.</text>
</comment>
<reference key="1">
    <citation type="journal article" date="2008" name="PLoS Genet.">
        <title>Genomic islands in the pathogenic filamentous fungus Aspergillus fumigatus.</title>
        <authorList>
            <person name="Fedorova N.D."/>
            <person name="Khaldi N."/>
            <person name="Joardar V.S."/>
            <person name="Maiti R."/>
            <person name="Amedeo P."/>
            <person name="Anderson M.J."/>
            <person name="Crabtree J."/>
            <person name="Silva J.C."/>
            <person name="Badger J.H."/>
            <person name="Albarraq A."/>
            <person name="Angiuoli S."/>
            <person name="Bussey H."/>
            <person name="Bowyer P."/>
            <person name="Cotty P.J."/>
            <person name="Dyer P.S."/>
            <person name="Egan A."/>
            <person name="Galens K."/>
            <person name="Fraser-Liggett C.M."/>
            <person name="Haas B.J."/>
            <person name="Inman J.M."/>
            <person name="Kent R."/>
            <person name="Lemieux S."/>
            <person name="Malavazi I."/>
            <person name="Orvis J."/>
            <person name="Roemer T."/>
            <person name="Ronning C.M."/>
            <person name="Sundaram J.P."/>
            <person name="Sutton G."/>
            <person name="Turner G."/>
            <person name="Venter J.C."/>
            <person name="White O.R."/>
            <person name="Whitty B.R."/>
            <person name="Youngman P."/>
            <person name="Wolfe K.H."/>
            <person name="Goldman G.H."/>
            <person name="Wortman J.R."/>
            <person name="Jiang B."/>
            <person name="Denning D.W."/>
            <person name="Nierman W.C."/>
        </authorList>
    </citation>
    <scope>NUCLEOTIDE SEQUENCE [LARGE SCALE GENOMIC DNA]</scope>
    <source>
        <strain>ATCC 1020 / DSM 3700 / CBS 544.65 / FGSC A1164 / JCM 1740 / NRRL 181 / WB 181</strain>
    </source>
</reference>
<feature type="chain" id="PRO_0000369298" description="Cytoplasmic tRNA 2-thiolation protein 2">
    <location>
        <begin position="1"/>
        <end position="370"/>
    </location>
</feature>
<dbReference type="EMBL" id="DS027696">
    <property type="protein sequence ID" value="EAW17560.1"/>
    <property type="molecule type" value="Genomic_DNA"/>
</dbReference>
<dbReference type="RefSeq" id="XP_001259457.1">
    <property type="nucleotide sequence ID" value="XM_001259456.1"/>
</dbReference>
<dbReference type="STRING" id="331117.A1DDV3"/>
<dbReference type="EnsemblFungi" id="EAW17560">
    <property type="protein sequence ID" value="EAW17560"/>
    <property type="gene ID" value="NFIA_074800"/>
</dbReference>
<dbReference type="GeneID" id="4585824"/>
<dbReference type="KEGG" id="nfi:NFIA_074800"/>
<dbReference type="VEuPathDB" id="FungiDB:NFIA_074800"/>
<dbReference type="eggNOG" id="KOG2594">
    <property type="taxonomic scope" value="Eukaryota"/>
</dbReference>
<dbReference type="HOGENOM" id="CLU_024534_3_0_1"/>
<dbReference type="OMA" id="KQRKQMM"/>
<dbReference type="OrthoDB" id="25129at2759"/>
<dbReference type="UniPathway" id="UPA00988"/>
<dbReference type="Proteomes" id="UP000006702">
    <property type="component" value="Unassembled WGS sequence"/>
</dbReference>
<dbReference type="GO" id="GO:0005829">
    <property type="term" value="C:cytosol"/>
    <property type="evidence" value="ECO:0000250"/>
    <property type="project" value="UniProtKB"/>
</dbReference>
<dbReference type="GO" id="GO:0016779">
    <property type="term" value="F:nucleotidyltransferase activity"/>
    <property type="evidence" value="ECO:0007669"/>
    <property type="project" value="UniProtKB-UniRule"/>
</dbReference>
<dbReference type="GO" id="GO:0016783">
    <property type="term" value="F:sulfurtransferase activity"/>
    <property type="evidence" value="ECO:0007669"/>
    <property type="project" value="TreeGrafter"/>
</dbReference>
<dbReference type="GO" id="GO:0000049">
    <property type="term" value="F:tRNA binding"/>
    <property type="evidence" value="ECO:0007669"/>
    <property type="project" value="InterPro"/>
</dbReference>
<dbReference type="GO" id="GO:0032447">
    <property type="term" value="P:protein urmylation"/>
    <property type="evidence" value="ECO:0007669"/>
    <property type="project" value="UniProtKB-UniRule"/>
</dbReference>
<dbReference type="GO" id="GO:0034227">
    <property type="term" value="P:tRNA thio-modification"/>
    <property type="evidence" value="ECO:0000250"/>
    <property type="project" value="UniProtKB"/>
</dbReference>
<dbReference type="GO" id="GO:0002143">
    <property type="term" value="P:tRNA wobble position uridine thiolation"/>
    <property type="evidence" value="ECO:0007669"/>
    <property type="project" value="TreeGrafter"/>
</dbReference>
<dbReference type="GO" id="GO:0002098">
    <property type="term" value="P:tRNA wobble uridine modification"/>
    <property type="evidence" value="ECO:0000250"/>
    <property type="project" value="UniProtKB"/>
</dbReference>
<dbReference type="FunFam" id="3.40.50.620:FF:000143">
    <property type="entry name" value="Cytoplasmic tRNA 2-thiolation protein 2"/>
    <property type="match status" value="1"/>
</dbReference>
<dbReference type="Gene3D" id="3.40.50.620">
    <property type="entry name" value="HUPs"/>
    <property type="match status" value="1"/>
</dbReference>
<dbReference type="HAMAP" id="MF_03054">
    <property type="entry name" value="CTU2"/>
    <property type="match status" value="1"/>
</dbReference>
<dbReference type="InterPro" id="IPR019407">
    <property type="entry name" value="CTU2"/>
</dbReference>
<dbReference type="InterPro" id="IPR014729">
    <property type="entry name" value="Rossmann-like_a/b/a_fold"/>
</dbReference>
<dbReference type="PANTHER" id="PTHR20882">
    <property type="entry name" value="CYTOPLASMIC TRNA 2-THIOLATION PROTEIN 2"/>
    <property type="match status" value="1"/>
</dbReference>
<dbReference type="PANTHER" id="PTHR20882:SF14">
    <property type="entry name" value="CYTOPLASMIC TRNA 2-THIOLATION PROTEIN 2"/>
    <property type="match status" value="1"/>
</dbReference>
<dbReference type="Pfam" id="PF10288">
    <property type="entry name" value="CTU2"/>
    <property type="match status" value="1"/>
</dbReference>
<dbReference type="SUPFAM" id="SSF52402">
    <property type="entry name" value="Adenine nucleotide alpha hydrolases-like"/>
    <property type="match status" value="1"/>
</dbReference>
<accession>A1DDV3</accession>
<proteinExistence type="inferred from homology"/>
<evidence type="ECO:0000255" key="1">
    <source>
        <dbReference type="HAMAP-Rule" id="MF_03054"/>
    </source>
</evidence>
<name>CTU2_NEOFI</name>